<evidence type="ECO:0000255" key="1">
    <source>
        <dbReference type="HAMAP-Rule" id="MF_01010"/>
    </source>
</evidence>
<evidence type="ECO:0000269" key="2">
    <source>
    </source>
</evidence>
<evidence type="ECO:0000269" key="3">
    <source>
    </source>
</evidence>
<evidence type="ECO:0000269" key="4">
    <source>
    </source>
</evidence>
<evidence type="ECO:0000269" key="5">
    <source>
    </source>
</evidence>
<evidence type="ECO:0000305" key="6">
    <source>
    </source>
</evidence>
<evidence type="ECO:0000305" key="7">
    <source>
    </source>
</evidence>
<evidence type="ECO:0007744" key="8">
    <source>
        <dbReference type="PDB" id="1UWV"/>
    </source>
</evidence>
<evidence type="ECO:0007744" key="9">
    <source>
        <dbReference type="PDB" id="2BH2"/>
    </source>
</evidence>
<evidence type="ECO:0007829" key="10">
    <source>
        <dbReference type="PDB" id="1UWV"/>
    </source>
</evidence>
<evidence type="ECO:0007829" key="11">
    <source>
        <dbReference type="PDB" id="2BH2"/>
    </source>
</evidence>
<organism>
    <name type="scientific">Escherichia coli (strain K12)</name>
    <dbReference type="NCBI Taxonomy" id="83333"/>
    <lineage>
        <taxon>Bacteria</taxon>
        <taxon>Pseudomonadati</taxon>
        <taxon>Pseudomonadota</taxon>
        <taxon>Gammaproteobacteria</taxon>
        <taxon>Enterobacterales</taxon>
        <taxon>Enterobacteriaceae</taxon>
        <taxon>Escherichia</taxon>
    </lineage>
</organism>
<dbReference type="EC" id="2.1.1.190" evidence="1"/>
<dbReference type="EMBL" id="U29580">
    <property type="protein sequence ID" value="AAA69295.1"/>
    <property type="molecule type" value="Genomic_DNA"/>
</dbReference>
<dbReference type="EMBL" id="U00096">
    <property type="protein sequence ID" value="AAC75827.1"/>
    <property type="molecule type" value="Genomic_DNA"/>
</dbReference>
<dbReference type="EMBL" id="AP009048">
    <property type="protein sequence ID" value="BAE76859.1"/>
    <property type="molecule type" value="Genomic_DNA"/>
</dbReference>
<dbReference type="PIR" id="E65060">
    <property type="entry name" value="E65060"/>
</dbReference>
<dbReference type="RefSeq" id="NP_417265.1">
    <property type="nucleotide sequence ID" value="NC_000913.3"/>
</dbReference>
<dbReference type="RefSeq" id="WP_000046812.1">
    <property type="nucleotide sequence ID" value="NZ_STEB01000030.1"/>
</dbReference>
<dbReference type="PDB" id="1UWV">
    <property type="method" value="X-ray"/>
    <property type="resolution" value="1.95 A"/>
    <property type="chains" value="A=1-433"/>
</dbReference>
<dbReference type="PDB" id="2BH2">
    <property type="method" value="X-ray"/>
    <property type="resolution" value="2.15 A"/>
    <property type="chains" value="A/B=2-433"/>
</dbReference>
<dbReference type="PDBsum" id="1UWV"/>
<dbReference type="PDBsum" id="2BH2"/>
<dbReference type="SMR" id="P55135"/>
<dbReference type="BioGRID" id="4262285">
    <property type="interactions" value="71"/>
</dbReference>
<dbReference type="DIP" id="DIP-12119N"/>
<dbReference type="FunCoup" id="P55135">
    <property type="interactions" value="614"/>
</dbReference>
<dbReference type="IntAct" id="P55135">
    <property type="interactions" value="2"/>
</dbReference>
<dbReference type="STRING" id="511145.b2785"/>
<dbReference type="jPOST" id="P55135"/>
<dbReference type="PaxDb" id="511145-b2785"/>
<dbReference type="EnsemblBacteria" id="AAC75827">
    <property type="protein sequence ID" value="AAC75827"/>
    <property type="gene ID" value="b2785"/>
</dbReference>
<dbReference type="GeneID" id="947243"/>
<dbReference type="KEGG" id="ecj:JW2756"/>
<dbReference type="KEGG" id="eco:b2785"/>
<dbReference type="KEGG" id="ecoc:C3026_15315"/>
<dbReference type="PATRIC" id="fig|1411691.4.peg.3950"/>
<dbReference type="EchoBASE" id="EB1228"/>
<dbReference type="eggNOG" id="COG2265">
    <property type="taxonomic scope" value="Bacteria"/>
</dbReference>
<dbReference type="HOGENOM" id="CLU_014689_8_2_6"/>
<dbReference type="InParanoid" id="P55135"/>
<dbReference type="OMA" id="GGCKWQH"/>
<dbReference type="OrthoDB" id="9804590at2"/>
<dbReference type="PhylomeDB" id="P55135"/>
<dbReference type="BioCyc" id="EcoCyc:EG11247-MONOMER"/>
<dbReference type="BioCyc" id="MetaCyc:EG11247-MONOMER"/>
<dbReference type="BRENDA" id="2.1.1.190">
    <property type="organism ID" value="2026"/>
</dbReference>
<dbReference type="EvolutionaryTrace" id="P55135"/>
<dbReference type="PRO" id="PR:P55135"/>
<dbReference type="Proteomes" id="UP000000625">
    <property type="component" value="Chromosome"/>
</dbReference>
<dbReference type="GO" id="GO:0051539">
    <property type="term" value="F:4 iron, 4 sulfur cluster binding"/>
    <property type="evidence" value="ECO:0000314"/>
    <property type="project" value="EcoCyc"/>
</dbReference>
<dbReference type="GO" id="GO:0005506">
    <property type="term" value="F:iron ion binding"/>
    <property type="evidence" value="ECO:0007669"/>
    <property type="project" value="UniProtKB-UniRule"/>
</dbReference>
<dbReference type="GO" id="GO:0003723">
    <property type="term" value="F:RNA binding"/>
    <property type="evidence" value="ECO:0007669"/>
    <property type="project" value="InterPro"/>
</dbReference>
<dbReference type="GO" id="GO:0070041">
    <property type="term" value="F:rRNA (uridine-C5-)-methyltransferase activity"/>
    <property type="evidence" value="ECO:0000314"/>
    <property type="project" value="EcoCyc"/>
</dbReference>
<dbReference type="GO" id="GO:0070475">
    <property type="term" value="P:rRNA base methylation"/>
    <property type="evidence" value="ECO:0000314"/>
    <property type="project" value="EcoCyc"/>
</dbReference>
<dbReference type="CDD" id="cd02440">
    <property type="entry name" value="AdoMet_MTases"/>
    <property type="match status" value="1"/>
</dbReference>
<dbReference type="FunFam" id="3.40.50.150:FF:000009">
    <property type="entry name" value="23S rRNA (Uracil(1939)-C(5))-methyltransferase RlmD"/>
    <property type="match status" value="1"/>
</dbReference>
<dbReference type="FunFam" id="2.40.50.1070:FF:000004">
    <property type="entry name" value="23S rRNA (uracil(1939)-C(5))-methyltransferase RlmD"/>
    <property type="match status" value="1"/>
</dbReference>
<dbReference type="FunFam" id="2.40.50.140:FF:000097">
    <property type="entry name" value="23S rRNA (uracil(1939)-C(5))-methyltransferase RlmD"/>
    <property type="match status" value="1"/>
</dbReference>
<dbReference type="Gene3D" id="2.40.50.1070">
    <property type="match status" value="1"/>
</dbReference>
<dbReference type="Gene3D" id="2.40.50.140">
    <property type="entry name" value="Nucleic acid-binding proteins"/>
    <property type="match status" value="1"/>
</dbReference>
<dbReference type="Gene3D" id="3.40.50.150">
    <property type="entry name" value="Vaccinia Virus protein VP39"/>
    <property type="match status" value="1"/>
</dbReference>
<dbReference type="HAMAP" id="MF_01010">
    <property type="entry name" value="23SrRNA_methyltr_RlmD"/>
    <property type="match status" value="1"/>
</dbReference>
<dbReference type="InterPro" id="IPR001566">
    <property type="entry name" value="23S_rRNA_MeTrfase_RlmD"/>
</dbReference>
<dbReference type="InterPro" id="IPR030390">
    <property type="entry name" value="MeTrfase_TrmA_AS"/>
</dbReference>
<dbReference type="InterPro" id="IPR030391">
    <property type="entry name" value="MeTrfase_TrmA_CS"/>
</dbReference>
<dbReference type="InterPro" id="IPR012340">
    <property type="entry name" value="NA-bd_OB-fold"/>
</dbReference>
<dbReference type="InterPro" id="IPR029063">
    <property type="entry name" value="SAM-dependent_MTases_sf"/>
</dbReference>
<dbReference type="InterPro" id="IPR002792">
    <property type="entry name" value="TRAM_dom"/>
</dbReference>
<dbReference type="InterPro" id="IPR010280">
    <property type="entry name" value="U5_MeTrfase_fam"/>
</dbReference>
<dbReference type="NCBIfam" id="NF009639">
    <property type="entry name" value="PRK13168.1"/>
    <property type="match status" value="1"/>
</dbReference>
<dbReference type="NCBIfam" id="TIGR00479">
    <property type="entry name" value="rumA"/>
    <property type="match status" value="1"/>
</dbReference>
<dbReference type="PANTHER" id="PTHR11061:SF49">
    <property type="entry name" value="23S RRNA (URACIL(1939)-C(5))-METHYLTRANSFERASE RLMD"/>
    <property type="match status" value="1"/>
</dbReference>
<dbReference type="PANTHER" id="PTHR11061">
    <property type="entry name" value="RNA M5U METHYLTRANSFERASE"/>
    <property type="match status" value="1"/>
</dbReference>
<dbReference type="Pfam" id="PF01938">
    <property type="entry name" value="TRAM"/>
    <property type="match status" value="1"/>
</dbReference>
<dbReference type="Pfam" id="PF05958">
    <property type="entry name" value="tRNA_U5-meth_tr"/>
    <property type="match status" value="1"/>
</dbReference>
<dbReference type="SUPFAM" id="SSF50249">
    <property type="entry name" value="Nucleic acid-binding proteins"/>
    <property type="match status" value="1"/>
</dbReference>
<dbReference type="SUPFAM" id="SSF53335">
    <property type="entry name" value="S-adenosyl-L-methionine-dependent methyltransferases"/>
    <property type="match status" value="1"/>
</dbReference>
<dbReference type="PROSITE" id="PS51687">
    <property type="entry name" value="SAM_MT_RNA_M5U"/>
    <property type="match status" value="1"/>
</dbReference>
<dbReference type="PROSITE" id="PS50926">
    <property type="entry name" value="TRAM"/>
    <property type="match status" value="1"/>
</dbReference>
<dbReference type="PROSITE" id="PS01230">
    <property type="entry name" value="TRMA_1"/>
    <property type="match status" value="1"/>
</dbReference>
<dbReference type="PROSITE" id="PS01231">
    <property type="entry name" value="TRMA_2"/>
    <property type="match status" value="1"/>
</dbReference>
<proteinExistence type="evidence at protein level"/>
<name>RLMD_ECOLI</name>
<protein>
    <recommendedName>
        <fullName evidence="1">23S rRNA (uracil(1939)-C(5))-methyltransferase RlmD</fullName>
        <ecNumber evidence="1">2.1.1.190</ecNumber>
    </recommendedName>
    <alternativeName>
        <fullName evidence="1">23S rRNA(m5U1939)-methyltransferase</fullName>
    </alternativeName>
</protein>
<keyword id="KW-0002">3D-structure</keyword>
<keyword id="KW-0004">4Fe-4S</keyword>
<keyword id="KW-0903">Direct protein sequencing</keyword>
<keyword id="KW-0408">Iron</keyword>
<keyword id="KW-0411">Iron-sulfur</keyword>
<keyword id="KW-0479">Metal-binding</keyword>
<keyword id="KW-0489">Methyltransferase</keyword>
<keyword id="KW-1185">Reference proteome</keyword>
<keyword id="KW-0698">rRNA processing</keyword>
<keyword id="KW-0949">S-adenosyl-L-methionine</keyword>
<keyword id="KW-0808">Transferase</keyword>
<gene>
    <name evidence="1" type="primary">rlmD</name>
    <name type="synonym">rumA</name>
    <name type="synonym">ygcA</name>
    <name type="ordered locus">b2785</name>
    <name type="ordered locus">JW2756</name>
</gene>
<comment type="function">
    <text evidence="1 2 3">Catalyzes the formation of 5-methyl-uridine at position 1939 (m5U1939) in 23S rRNA.</text>
</comment>
<comment type="catalytic activity">
    <reaction evidence="1 2 3">
        <text>uridine(1939) in 23S rRNA + S-adenosyl-L-methionine = 5-methyluridine(1939) in 23S rRNA + S-adenosyl-L-homocysteine + H(+)</text>
        <dbReference type="Rhea" id="RHEA:42908"/>
        <dbReference type="Rhea" id="RHEA-COMP:10278"/>
        <dbReference type="Rhea" id="RHEA-COMP:10279"/>
        <dbReference type="ChEBI" id="CHEBI:15378"/>
        <dbReference type="ChEBI" id="CHEBI:57856"/>
        <dbReference type="ChEBI" id="CHEBI:59789"/>
        <dbReference type="ChEBI" id="CHEBI:65315"/>
        <dbReference type="ChEBI" id="CHEBI:74447"/>
        <dbReference type="EC" id="2.1.1.190"/>
    </reaction>
</comment>
<comment type="domain">
    <text evidence="4">Contains three structural domains: an N-terminal TRAM domain, a central domain containing an iron-sulfur cluster, and a C-terminal domain that displays the typical SAM-dependent methyltransferase fold.</text>
</comment>
<comment type="miscellaneous">
    <text evidence="6">The function of the iron-sulfur cluster remains unclear. It may be involved in the correct folding of the protein or may have a role in RNA binding.</text>
</comment>
<comment type="similarity">
    <text evidence="1">Belongs to the class I-like SAM-binding methyltransferase superfamily. RNA M5U methyltransferase family. RlmD subfamily.</text>
</comment>
<reference key="1">
    <citation type="journal article" date="1997" name="Science">
        <title>The complete genome sequence of Escherichia coli K-12.</title>
        <authorList>
            <person name="Blattner F.R."/>
            <person name="Plunkett G. III"/>
            <person name="Bloch C.A."/>
            <person name="Perna N.T."/>
            <person name="Burland V."/>
            <person name="Riley M."/>
            <person name="Collado-Vides J."/>
            <person name="Glasner J.D."/>
            <person name="Rode C.K."/>
            <person name="Mayhew G.F."/>
            <person name="Gregor J."/>
            <person name="Davis N.W."/>
            <person name="Kirkpatrick H.A."/>
            <person name="Goeden M.A."/>
            <person name="Rose D.J."/>
            <person name="Mau B."/>
            <person name="Shao Y."/>
        </authorList>
    </citation>
    <scope>NUCLEOTIDE SEQUENCE [LARGE SCALE GENOMIC DNA]</scope>
    <source>
        <strain>K12 / MG1655 / ATCC 47076</strain>
    </source>
</reference>
<reference key="2">
    <citation type="journal article" date="2006" name="Mol. Syst. Biol.">
        <title>Highly accurate genome sequences of Escherichia coli K-12 strains MG1655 and W3110.</title>
        <authorList>
            <person name="Hayashi K."/>
            <person name="Morooka N."/>
            <person name="Yamamoto Y."/>
            <person name="Fujita K."/>
            <person name="Isono K."/>
            <person name="Choi S."/>
            <person name="Ohtsubo E."/>
            <person name="Baba T."/>
            <person name="Wanner B.L."/>
            <person name="Mori H."/>
            <person name="Horiuchi T."/>
        </authorList>
    </citation>
    <scope>NUCLEOTIDE SEQUENCE [LARGE SCALE GENOMIC DNA]</scope>
    <source>
        <strain>K12 / W3110 / ATCC 27325 / DSM 5911</strain>
    </source>
</reference>
<reference key="3">
    <citation type="journal article" date="2002" name="J. Biol. Chem.">
        <title>Characterization of the 23 S ribosomal RNA m5U1939 methyltransferase from Escherichia coli.</title>
        <authorList>
            <person name="Agarwalla S."/>
            <person name="Kealey J.T."/>
            <person name="Santi D.V."/>
            <person name="Stroud R.M."/>
        </authorList>
    </citation>
    <scope>PROTEIN SEQUENCE OF 2-11</scope>
    <scope>FUNCTION</scope>
    <scope>CATALYTIC ACTIVITY</scope>
    <scope>CHARACTERIZATION</scope>
</reference>
<reference key="4">
    <citation type="journal article" date="2003" name="Nucleic Acids Res.">
        <title>Identifying the methyltransferases for m(5)U747 and m(5)U1939 in 23S rRNA using MALDI mass spectrometry.</title>
        <authorList>
            <person name="Madsen C.T."/>
            <person name="Mengel-Joergensen J."/>
            <person name="Kirpekar F."/>
            <person name="Douthwaite S."/>
        </authorList>
    </citation>
    <scope>FUNCTION</scope>
    <scope>CATALYTIC ACTIVITY</scope>
</reference>
<reference evidence="8" key="5">
    <citation type="journal article" date="2004" name="Structure">
        <title>Crystal structure of RumA, an iron-sulfur cluster containing E. coli ribosomal RNA 5-methyluridine methyltransferase.</title>
        <authorList>
            <person name="Lee T.T."/>
            <person name="Agarwalla S."/>
            <person name="Stroud R.M."/>
        </authorList>
    </citation>
    <scope>X-RAY CRYSTALLOGRAPHY (1.95 ANGSTROMS) OF 15-431</scope>
    <scope>IRON-SULFUR CLUSTER</scope>
    <scope>DOMAIN</scope>
</reference>
<reference evidence="9" key="6">
    <citation type="journal article" date="2005" name="Cell">
        <title>A unique RNA Fold in the RumA-RNA-cofactor ternary complex contributes to substrate selectivity and enzymatic function.</title>
        <authorList>
            <person name="Lee T.T."/>
            <person name="Agarwalla S."/>
            <person name="Stroud R.M."/>
        </authorList>
    </citation>
    <scope>X-RAY CRYSTALLOGRAPHY (2.15 ANGSTROMS) IN COMPLEX WITH RNA; S-ADENOSYL-L-HOMOCYSTEINE AND IRON-SULFUR CLUSTER</scope>
    <scope>ACTIVE SITE</scope>
</reference>
<sequence>MAQFYSAKRRTTTRQIITVSVNDLDSFGQGVARHNGKTLFIPGLLPQENAEVTVTEDKKQYARAKVVRRLSDSPERETPRCPHFGVCGGCQQQHASVDLQQRSKSAALARLMKHDVSEVIADVPWGYRRRARLSLNYLPKTQQLQMGFRKAGSSDIVDVKQCPILAPQLEALLPKVRACLGSLQAMRHLGHVELVQATSGTLMILRHTAPLSSADREKLERFSHSEGLDLYLAPDSEILETVSGEMPWYDSNGLRLTFSPRDFIQVNAGVNQKMVARALEWLDVQPEDRVLDLFCGMGNFTLPLATQAASVVGVEGVPALVEKGQQNARLNGLQNVTFYHENLEEDVTKQPWAKNGFDKVLLDPARAGAAGVMQQIIKLEPIRIVYVSCNPATLARDSEALLKAGYTIARLAMLDMFPHTGHLESMVLFSRVK</sequence>
<feature type="initiator methionine" description="Removed" evidence="2">
    <location>
        <position position="1"/>
    </location>
</feature>
<feature type="chain" id="PRO_0000161893" description="23S rRNA (uracil(1939)-C(5))-methyltransferase RlmD">
    <location>
        <begin position="2"/>
        <end position="433"/>
    </location>
</feature>
<feature type="domain" description="TRAM" evidence="1">
    <location>
        <begin position="10"/>
        <end position="68"/>
    </location>
</feature>
<feature type="region of interest" description="Interaction with RNA">
    <location>
        <begin position="23"/>
        <end position="40"/>
    </location>
</feature>
<feature type="region of interest" description="Interaction with RNA">
    <location>
        <begin position="58"/>
        <end position="63"/>
    </location>
</feature>
<feature type="active site" description="Nucleophile" evidence="1 5">
    <location>
        <position position="389"/>
    </location>
</feature>
<feature type="binding site" evidence="4 5">
    <location>
        <position position="81"/>
    </location>
    <ligand>
        <name>[4Fe-4S] cluster</name>
        <dbReference type="ChEBI" id="CHEBI:49883"/>
    </ligand>
</feature>
<feature type="binding site" evidence="4 5">
    <location>
        <position position="87"/>
    </location>
    <ligand>
        <name>[4Fe-4S] cluster</name>
        <dbReference type="ChEBI" id="CHEBI:49883"/>
    </ligand>
</feature>
<feature type="binding site" evidence="4 5">
    <location>
        <position position="90"/>
    </location>
    <ligand>
        <name>[4Fe-4S] cluster</name>
        <dbReference type="ChEBI" id="CHEBI:49883"/>
    </ligand>
</feature>
<feature type="binding site" evidence="4 5">
    <location>
        <position position="162"/>
    </location>
    <ligand>
        <name>[4Fe-4S] cluster</name>
        <dbReference type="ChEBI" id="CHEBI:49883"/>
    </ligand>
</feature>
<feature type="binding site" evidence="7">
    <location>
        <position position="265"/>
    </location>
    <ligand>
        <name>S-adenosyl-L-methionine</name>
        <dbReference type="ChEBI" id="CHEBI:59789"/>
    </ligand>
</feature>
<feature type="binding site" evidence="7">
    <location>
        <position position="294"/>
    </location>
    <ligand>
        <name>S-adenosyl-L-methionine</name>
        <dbReference type="ChEBI" id="CHEBI:59789"/>
    </ligand>
</feature>
<feature type="binding site" evidence="7">
    <location>
        <position position="299"/>
    </location>
    <ligand>
        <name>S-adenosyl-L-methionine</name>
        <dbReference type="ChEBI" id="CHEBI:59789"/>
    </ligand>
</feature>
<feature type="binding site" evidence="7">
    <location>
        <position position="315"/>
    </location>
    <ligand>
        <name>S-adenosyl-L-methionine</name>
        <dbReference type="ChEBI" id="CHEBI:59789"/>
    </ligand>
</feature>
<feature type="binding site" evidence="7">
    <location>
        <position position="342"/>
    </location>
    <ligand>
        <name>S-adenosyl-L-methionine</name>
        <dbReference type="ChEBI" id="CHEBI:59789"/>
    </ligand>
</feature>
<feature type="binding site" evidence="7">
    <location>
        <position position="363"/>
    </location>
    <ligand>
        <name>S-adenosyl-L-methionine</name>
        <dbReference type="ChEBI" id="CHEBI:59789"/>
    </ligand>
</feature>
<feature type="site" description="Interaction with RNA">
    <location>
        <position position="132"/>
    </location>
</feature>
<feature type="site" description="Interaction with RNA">
    <location>
        <position position="149"/>
    </location>
</feature>
<feature type="strand" evidence="10">
    <location>
        <begin position="17"/>
        <end position="24"/>
    </location>
</feature>
<feature type="strand" evidence="10">
    <location>
        <begin position="28"/>
        <end position="34"/>
    </location>
</feature>
<feature type="strand" evidence="10">
    <location>
        <begin position="37"/>
        <end position="42"/>
    </location>
</feature>
<feature type="strand" evidence="10">
    <location>
        <begin position="49"/>
        <end position="57"/>
    </location>
</feature>
<feature type="strand" evidence="10">
    <location>
        <begin position="59"/>
        <end position="69"/>
    </location>
</feature>
<feature type="turn" evidence="10">
    <location>
        <begin position="82"/>
        <end position="86"/>
    </location>
</feature>
<feature type="strand" evidence="11">
    <location>
        <begin position="87"/>
        <end position="89"/>
    </location>
</feature>
<feature type="helix" evidence="10">
    <location>
        <begin position="97"/>
        <end position="112"/>
    </location>
</feature>
<feature type="strand" evidence="10">
    <location>
        <begin position="118"/>
        <end position="120"/>
    </location>
</feature>
<feature type="strand" evidence="10">
    <location>
        <begin position="124"/>
        <end position="126"/>
    </location>
</feature>
<feature type="strand" evidence="10">
    <location>
        <begin position="128"/>
        <end position="138"/>
    </location>
</feature>
<feature type="turn" evidence="10">
    <location>
        <begin position="139"/>
        <end position="142"/>
    </location>
</feature>
<feature type="strand" evidence="10">
    <location>
        <begin position="143"/>
        <end position="150"/>
    </location>
</feature>
<feature type="strand" evidence="10">
    <location>
        <begin position="156"/>
        <end position="158"/>
    </location>
</feature>
<feature type="helix" evidence="10">
    <location>
        <begin position="167"/>
        <end position="180"/>
    </location>
</feature>
<feature type="helix" evidence="10">
    <location>
        <begin position="184"/>
        <end position="188"/>
    </location>
</feature>
<feature type="strand" evidence="10">
    <location>
        <begin position="189"/>
        <end position="197"/>
    </location>
</feature>
<feature type="strand" evidence="10">
    <location>
        <begin position="200"/>
        <end position="209"/>
    </location>
</feature>
<feature type="helix" evidence="10">
    <location>
        <begin position="213"/>
        <end position="226"/>
    </location>
</feature>
<feature type="strand" evidence="10">
    <location>
        <begin position="229"/>
        <end position="237"/>
    </location>
</feature>
<feature type="strand" evidence="10">
    <location>
        <begin position="240"/>
        <end position="243"/>
    </location>
</feature>
<feature type="strand" evidence="10">
    <location>
        <begin position="248"/>
        <end position="251"/>
    </location>
</feature>
<feature type="strand" evidence="10">
    <location>
        <begin position="254"/>
        <end position="257"/>
    </location>
</feature>
<feature type="strand" evidence="10">
    <location>
        <begin position="260"/>
        <end position="262"/>
    </location>
</feature>
<feature type="helix" evidence="10">
    <location>
        <begin position="268"/>
        <end position="282"/>
    </location>
</feature>
<feature type="strand" evidence="10">
    <location>
        <begin position="289"/>
        <end position="294"/>
    </location>
</feature>
<feature type="turn" evidence="10">
    <location>
        <begin position="296"/>
        <end position="300"/>
    </location>
</feature>
<feature type="helix" evidence="10">
    <location>
        <begin position="301"/>
        <end position="305"/>
    </location>
</feature>
<feature type="strand" evidence="10">
    <location>
        <begin position="308"/>
        <end position="316"/>
    </location>
</feature>
<feature type="helix" evidence="10">
    <location>
        <begin position="318"/>
        <end position="330"/>
    </location>
</feature>
<feature type="strand" evidence="10">
    <location>
        <begin position="335"/>
        <end position="340"/>
    </location>
</feature>
<feature type="strand" evidence="10">
    <location>
        <begin position="348"/>
        <end position="350"/>
    </location>
</feature>
<feature type="helix" evidence="10">
    <location>
        <begin position="351"/>
        <end position="353"/>
    </location>
</feature>
<feature type="strand" evidence="10">
    <location>
        <begin position="358"/>
        <end position="362"/>
    </location>
</feature>
<feature type="helix" evidence="10">
    <location>
        <begin position="370"/>
        <end position="379"/>
    </location>
</feature>
<feature type="strand" evidence="10">
    <location>
        <begin position="382"/>
        <end position="389"/>
    </location>
</feature>
<feature type="helix" evidence="10">
    <location>
        <begin position="391"/>
        <end position="403"/>
    </location>
</feature>
<feature type="strand" evidence="10">
    <location>
        <begin position="407"/>
        <end position="414"/>
    </location>
</feature>
<feature type="strand" evidence="10">
    <location>
        <begin position="424"/>
        <end position="430"/>
    </location>
</feature>
<accession>P55135</accession>
<accession>Q2MA47</accession>